<accession>Q8Z4G9</accession>
<accession>Q7C7U8</accession>
<proteinExistence type="inferred from homology"/>
<evidence type="ECO:0000250" key="1"/>
<comment type="function">
    <text evidence="1">Effector proteins function to alter host cell physiology and promote bacterial survival in host tissues. Involved in the reorganization of late endosome/lysosome (LE/Lys) compartments in mammalian cells. Necessary and sufficient to link kinesin-1 onto the Salmonella-containing vacuole (SCV) membrane. Required for centrifugal extension of lysosomal glycoprotein-rich membrane tubules, known as Salmonella-induced filaments (Sifs), away from the SCV and toward the cell periphery. Required for virulence, but not for intracellular survival and replication in phagocytic cells (By similarity).</text>
</comment>
<comment type="subunit">
    <text evidence="1">Interacts with the host kinesin light chain (KLC), a subunit of the kinesin-1 motor complex.</text>
</comment>
<comment type="subcellular location">
    <subcellularLocation>
        <location evidence="1">Secreted</location>
    </subcellularLocation>
    <subcellularLocation>
        <location evidence="1">Host membrane</location>
    </subcellularLocation>
    <text evidence="1">Secreted via the type III secretion system 2 (SPI-2 T3SS), and delivered into the host cell.</text>
</comment>
<comment type="domain">
    <text evidence="1">Contains various tandem pentapeptide repeats in the C-terminal region. The pentapeptide motif is required to efficiently recruit kinesin-1. No position is completely conserved in these repeats, whose consensus sequence is A-[DN]-[FLM]-X-X. The C-terminal 38 amino acid residues are required for peripheral localization of PipB2 and redistribution of lysosomal-associated membrane protein (LAMP). The N-terminal 225 amino acid residues are sufficient for type III translocation and association with Sifs and SCVs, but not accumulation in peripheral vesicles (By similarity).</text>
</comment>
<sequence>MQRSLDSLAGMATSAFGAGTSAAMRQATSPKTILQHIINFFTCGGIRRRNETQYQELIETMAETLKSSMSDRGAPLPENIILDDVDGCRVEFNLPGENNEAGQVIVRVSKGDNSETREIPLASFEKICRALLFRCEFSLPQDSVILTAQGGMNLKGAVLTGANLTAENLCDADLSGADLEGAILFMADCDGANFKGANLSGASLGDSNLTNACLEDSIMCGATLDRANLTGANLQHTSLLGCSMVECNCSGANMDHANVSGSTLIRADMSGATLKGATIMAAIMEGAVLTRANLQKASFTATNLDGADLSEANLRNTSFKDCTLTDLRTEDATMSTSTQTLFNVFYSENI</sequence>
<dbReference type="EMBL" id="AL513382">
    <property type="protein sequence ID" value="CAD05888.1"/>
    <property type="molecule type" value="Genomic_DNA"/>
</dbReference>
<dbReference type="EMBL" id="AE014613">
    <property type="protein sequence ID" value="AAO70245.1"/>
    <property type="molecule type" value="Genomic_DNA"/>
</dbReference>
<dbReference type="RefSeq" id="NP_457179.1">
    <property type="nucleotide sequence ID" value="NC_003198.1"/>
</dbReference>
<dbReference type="RefSeq" id="WP_001801692.1">
    <property type="nucleotide sequence ID" value="NZ_WSUR01000031.1"/>
</dbReference>
<dbReference type="SMR" id="Q8Z4G9"/>
<dbReference type="STRING" id="220341.gene:17586793"/>
<dbReference type="KEGG" id="stt:t2674"/>
<dbReference type="KEGG" id="sty:STY2897"/>
<dbReference type="PATRIC" id="fig|220341.7.peg.2948"/>
<dbReference type="eggNOG" id="COG1357">
    <property type="taxonomic scope" value="Bacteria"/>
</dbReference>
<dbReference type="HOGENOM" id="CLU_067808_0_0_6"/>
<dbReference type="OMA" id="ADCDGAN"/>
<dbReference type="OrthoDB" id="156143at2"/>
<dbReference type="Proteomes" id="UP000000541">
    <property type="component" value="Chromosome"/>
</dbReference>
<dbReference type="Proteomes" id="UP000002670">
    <property type="component" value="Chromosome"/>
</dbReference>
<dbReference type="GO" id="GO:0005576">
    <property type="term" value="C:extracellular region"/>
    <property type="evidence" value="ECO:0007669"/>
    <property type="project" value="UniProtKB-SubCell"/>
</dbReference>
<dbReference type="GO" id="GO:0033644">
    <property type="term" value="C:host cell membrane"/>
    <property type="evidence" value="ECO:0007669"/>
    <property type="project" value="UniProtKB-SubCell"/>
</dbReference>
<dbReference type="GO" id="GO:0016020">
    <property type="term" value="C:membrane"/>
    <property type="evidence" value="ECO:0007669"/>
    <property type="project" value="UniProtKB-KW"/>
</dbReference>
<dbReference type="Gene3D" id="2.160.20.80">
    <property type="entry name" value="E3 ubiquitin-protein ligase SopA"/>
    <property type="match status" value="2"/>
</dbReference>
<dbReference type="Gene3D" id="3.30.2450.10">
    <property type="entry name" value="Secreted effector protein pipB2"/>
    <property type="match status" value="1"/>
</dbReference>
<dbReference type="InterPro" id="IPR001646">
    <property type="entry name" value="5peptide_repeat"/>
</dbReference>
<dbReference type="InterPro" id="IPR051082">
    <property type="entry name" value="Pentapeptide-BTB/POZ_domain"/>
</dbReference>
<dbReference type="InterPro" id="IPR048984">
    <property type="entry name" value="PipB2_N"/>
</dbReference>
<dbReference type="NCBIfam" id="NF011743">
    <property type="entry name" value="PRK15196.1"/>
    <property type="match status" value="1"/>
</dbReference>
<dbReference type="PANTHER" id="PTHR14136">
    <property type="entry name" value="BTB_POZ DOMAIN-CONTAINING PROTEIN KCTD9"/>
    <property type="match status" value="1"/>
</dbReference>
<dbReference type="PANTHER" id="PTHR14136:SF17">
    <property type="entry name" value="BTB_POZ DOMAIN-CONTAINING PROTEIN KCTD9"/>
    <property type="match status" value="1"/>
</dbReference>
<dbReference type="Pfam" id="PF00805">
    <property type="entry name" value="Pentapeptide"/>
    <property type="match status" value="3"/>
</dbReference>
<dbReference type="Pfam" id="PF21684">
    <property type="entry name" value="PipB2_N"/>
    <property type="match status" value="1"/>
</dbReference>
<dbReference type="SUPFAM" id="SSF141571">
    <property type="entry name" value="Pentapeptide repeat-like"/>
    <property type="match status" value="1"/>
</dbReference>
<keyword id="KW-1043">Host membrane</keyword>
<keyword id="KW-0472">Membrane</keyword>
<keyword id="KW-0677">Repeat</keyword>
<keyword id="KW-0964">Secreted</keyword>
<keyword id="KW-0843">Virulence</keyword>
<feature type="chain" id="PRO_0000278298" description="Secreted effector protein PipB2">
    <location>
        <begin position="1"/>
        <end position="350"/>
    </location>
</feature>
<feature type="domain" description="Pentapeptide repeat 1">
    <location>
        <begin position="162"/>
        <end position="201"/>
    </location>
</feature>
<feature type="domain" description="Pentapeptide repeat 2">
    <location>
        <begin position="202"/>
        <end position="241"/>
    </location>
</feature>
<feature type="domain" description="Pentapeptide repeat 3">
    <location>
        <begin position="247"/>
        <end position="286"/>
    </location>
</feature>
<feature type="domain" description="Pentapeptide repeat 4">
    <location>
        <begin position="287"/>
        <end position="326"/>
    </location>
</feature>
<protein>
    <recommendedName>
        <fullName>Secreted effector protein PipB2</fullName>
    </recommendedName>
    <alternativeName>
        <fullName>Type III effector PipB2</fullName>
    </alternativeName>
</protein>
<gene>
    <name type="primary">pipB2</name>
    <name type="ordered locus">STY2897</name>
    <name type="ordered locus">t2674</name>
</gene>
<reference key="1">
    <citation type="journal article" date="2001" name="Nature">
        <title>Complete genome sequence of a multiple drug resistant Salmonella enterica serovar Typhi CT18.</title>
        <authorList>
            <person name="Parkhill J."/>
            <person name="Dougan G."/>
            <person name="James K.D."/>
            <person name="Thomson N.R."/>
            <person name="Pickard D."/>
            <person name="Wain J."/>
            <person name="Churcher C.M."/>
            <person name="Mungall K.L."/>
            <person name="Bentley S.D."/>
            <person name="Holden M.T.G."/>
            <person name="Sebaihia M."/>
            <person name="Baker S."/>
            <person name="Basham D."/>
            <person name="Brooks K."/>
            <person name="Chillingworth T."/>
            <person name="Connerton P."/>
            <person name="Cronin A."/>
            <person name="Davis P."/>
            <person name="Davies R.M."/>
            <person name="Dowd L."/>
            <person name="White N."/>
            <person name="Farrar J."/>
            <person name="Feltwell T."/>
            <person name="Hamlin N."/>
            <person name="Haque A."/>
            <person name="Hien T.T."/>
            <person name="Holroyd S."/>
            <person name="Jagels K."/>
            <person name="Krogh A."/>
            <person name="Larsen T.S."/>
            <person name="Leather S."/>
            <person name="Moule S."/>
            <person name="O'Gaora P."/>
            <person name="Parry C."/>
            <person name="Quail M.A."/>
            <person name="Rutherford K.M."/>
            <person name="Simmonds M."/>
            <person name="Skelton J."/>
            <person name="Stevens K."/>
            <person name="Whitehead S."/>
            <person name="Barrell B.G."/>
        </authorList>
    </citation>
    <scope>NUCLEOTIDE SEQUENCE [LARGE SCALE GENOMIC DNA]</scope>
    <source>
        <strain>CT18</strain>
    </source>
</reference>
<reference key="2">
    <citation type="journal article" date="2003" name="J. Bacteriol.">
        <title>Comparative genomics of Salmonella enterica serovar Typhi strains Ty2 and CT18.</title>
        <authorList>
            <person name="Deng W."/>
            <person name="Liou S.-R."/>
            <person name="Plunkett G. III"/>
            <person name="Mayhew G.F."/>
            <person name="Rose D.J."/>
            <person name="Burland V."/>
            <person name="Kodoyianni V."/>
            <person name="Schwartz D.C."/>
            <person name="Blattner F.R."/>
        </authorList>
    </citation>
    <scope>NUCLEOTIDE SEQUENCE [LARGE SCALE GENOMIC DNA]</scope>
    <source>
        <strain>ATCC 700931 / Ty2</strain>
    </source>
</reference>
<organism>
    <name type="scientific">Salmonella typhi</name>
    <dbReference type="NCBI Taxonomy" id="90370"/>
    <lineage>
        <taxon>Bacteria</taxon>
        <taxon>Pseudomonadati</taxon>
        <taxon>Pseudomonadota</taxon>
        <taxon>Gammaproteobacteria</taxon>
        <taxon>Enterobacterales</taxon>
        <taxon>Enterobacteriaceae</taxon>
        <taxon>Salmonella</taxon>
    </lineage>
</organism>
<name>PIPB2_SALTI</name>